<proteinExistence type="evidence at protein level"/>
<name>SCK1_SCHPO</name>
<comment type="function">
    <text evidence="7">Protein kinase that is part of growth control pathway which is at least partially redundant with the cAMP pathway. Required for trehalase activation.</text>
</comment>
<comment type="catalytic activity">
    <reaction>
        <text>L-seryl-[protein] + ATP = O-phospho-L-seryl-[protein] + ADP + H(+)</text>
        <dbReference type="Rhea" id="RHEA:17989"/>
        <dbReference type="Rhea" id="RHEA-COMP:9863"/>
        <dbReference type="Rhea" id="RHEA-COMP:11604"/>
        <dbReference type="ChEBI" id="CHEBI:15378"/>
        <dbReference type="ChEBI" id="CHEBI:29999"/>
        <dbReference type="ChEBI" id="CHEBI:30616"/>
        <dbReference type="ChEBI" id="CHEBI:83421"/>
        <dbReference type="ChEBI" id="CHEBI:456216"/>
        <dbReference type="EC" id="2.7.11.1"/>
    </reaction>
</comment>
<comment type="catalytic activity">
    <reaction>
        <text>L-threonyl-[protein] + ATP = O-phospho-L-threonyl-[protein] + ADP + H(+)</text>
        <dbReference type="Rhea" id="RHEA:46608"/>
        <dbReference type="Rhea" id="RHEA-COMP:11060"/>
        <dbReference type="Rhea" id="RHEA-COMP:11605"/>
        <dbReference type="ChEBI" id="CHEBI:15378"/>
        <dbReference type="ChEBI" id="CHEBI:30013"/>
        <dbReference type="ChEBI" id="CHEBI:30616"/>
        <dbReference type="ChEBI" id="CHEBI:61977"/>
        <dbReference type="ChEBI" id="CHEBI:456216"/>
        <dbReference type="EC" id="2.7.11.1"/>
    </reaction>
</comment>
<comment type="similarity">
    <text evidence="8">Belongs to the protein kinase superfamily. AGC Ser/Thr protein kinase family. cAMP subfamily.</text>
</comment>
<dbReference type="EC" id="2.7.11.1"/>
<dbReference type="EMBL" id="D38108">
    <property type="protein sequence ID" value="BAA07286.1"/>
    <property type="molecule type" value="Genomic_DNA"/>
</dbReference>
<dbReference type="EMBL" id="CU329670">
    <property type="protein sequence ID" value="CAB53053.1"/>
    <property type="molecule type" value="Genomic_DNA"/>
</dbReference>
<dbReference type="PIR" id="S55694">
    <property type="entry name" value="S55694"/>
</dbReference>
<dbReference type="RefSeq" id="NP_593754.1">
    <property type="nucleotide sequence ID" value="NM_001019184.2"/>
</dbReference>
<dbReference type="SMR" id="P50530"/>
<dbReference type="BioGRID" id="278951">
    <property type="interactions" value="29"/>
</dbReference>
<dbReference type="FunCoup" id="P50530">
    <property type="interactions" value="55"/>
</dbReference>
<dbReference type="IntAct" id="P50530">
    <property type="interactions" value="1"/>
</dbReference>
<dbReference type="STRING" id="284812.P50530"/>
<dbReference type="iPTMnet" id="P50530"/>
<dbReference type="PaxDb" id="4896-SPAC1B9.02c.1"/>
<dbReference type="EnsemblFungi" id="SPAC1B9.02c.1">
    <property type="protein sequence ID" value="SPAC1B9.02c.1:pep"/>
    <property type="gene ID" value="SPAC1B9.02c"/>
</dbReference>
<dbReference type="GeneID" id="2542492"/>
<dbReference type="KEGG" id="spo:2542492"/>
<dbReference type="PomBase" id="SPAC1B9.02c">
    <property type="gene designation" value="sck1"/>
</dbReference>
<dbReference type="VEuPathDB" id="FungiDB:SPAC1B9.02c"/>
<dbReference type="eggNOG" id="KOG0598">
    <property type="taxonomic scope" value="Eukaryota"/>
</dbReference>
<dbReference type="HOGENOM" id="CLU_000288_52_2_1"/>
<dbReference type="InParanoid" id="P50530"/>
<dbReference type="OMA" id="SYAMGTT"/>
<dbReference type="PhylomeDB" id="P50530"/>
<dbReference type="BRENDA" id="2.7.11.1">
    <property type="organism ID" value="5613"/>
</dbReference>
<dbReference type="Reactome" id="R-SPO-1257604">
    <property type="pathway name" value="PIP3 activates AKT signaling"/>
</dbReference>
<dbReference type="Reactome" id="R-SPO-1358803">
    <property type="pathway name" value="Downregulation of ERBB2:ERBB3 signaling"/>
</dbReference>
<dbReference type="Reactome" id="R-SPO-1474151">
    <property type="pathway name" value="Tetrahydrobiopterin (BH4) synthesis, recycling, salvage and regulation"/>
</dbReference>
<dbReference type="Reactome" id="R-SPO-165158">
    <property type="pathway name" value="Activation of AKT2"/>
</dbReference>
<dbReference type="Reactome" id="R-SPO-165181">
    <property type="pathway name" value="Inhibition of TSC complex formation by PKB"/>
</dbReference>
<dbReference type="Reactome" id="R-SPO-198323">
    <property type="pathway name" value="AKT phosphorylates targets in the cytosol"/>
</dbReference>
<dbReference type="Reactome" id="R-SPO-198693">
    <property type="pathway name" value="AKT phosphorylates targets in the nucleus"/>
</dbReference>
<dbReference type="Reactome" id="R-SPO-203615">
    <property type="pathway name" value="eNOS activation"/>
</dbReference>
<dbReference type="Reactome" id="R-SPO-389357">
    <property type="pathway name" value="CD28 dependent PI3K/Akt signaling"/>
</dbReference>
<dbReference type="Reactome" id="R-SPO-389513">
    <property type="pathway name" value="Co-inhibition by CTLA4"/>
</dbReference>
<dbReference type="Reactome" id="R-SPO-392451">
    <property type="pathway name" value="G beta:gamma signalling through PI3Kgamma"/>
</dbReference>
<dbReference type="Reactome" id="R-SPO-450385">
    <property type="pathway name" value="Butyrate Response Factor 1 (BRF1) binds and destabilizes mRNA"/>
</dbReference>
<dbReference type="Reactome" id="R-SPO-5218920">
    <property type="pathway name" value="VEGFR2 mediated vascular permeability"/>
</dbReference>
<dbReference type="Reactome" id="R-SPO-5628897">
    <property type="pathway name" value="TP53 Regulates Metabolic Genes"/>
</dbReference>
<dbReference type="Reactome" id="R-SPO-6804757">
    <property type="pathway name" value="Regulation of TP53 Degradation"/>
</dbReference>
<dbReference type="Reactome" id="R-SPO-6804758">
    <property type="pathway name" value="Regulation of TP53 Activity through Acetylation"/>
</dbReference>
<dbReference type="Reactome" id="R-SPO-6811558">
    <property type="pathway name" value="PI5P, PP2A and IER3 Regulate PI3K/AKT Signaling"/>
</dbReference>
<dbReference type="Reactome" id="R-SPO-8948751">
    <property type="pathway name" value="Regulation of PTEN stability and activity"/>
</dbReference>
<dbReference type="Reactome" id="R-SPO-9009391">
    <property type="pathway name" value="Extra-nuclear estrogen signaling"/>
</dbReference>
<dbReference type="Reactome" id="R-SPO-9031628">
    <property type="pathway name" value="NGF-stimulated transcription"/>
</dbReference>
<dbReference type="Reactome" id="R-SPO-9841251">
    <property type="pathway name" value="Mitochondrial unfolded protein response (UPRmt)"/>
</dbReference>
<dbReference type="Reactome" id="R-SPO-9856530">
    <property type="pathway name" value="High laminar flow shear stress activates signaling by PIEZO1 and PECAM1:CDH5:KDR in endothelial cells"/>
</dbReference>
<dbReference type="PRO" id="PR:P50530"/>
<dbReference type="Proteomes" id="UP000002485">
    <property type="component" value="Chromosome I"/>
</dbReference>
<dbReference type="GO" id="GO:0005829">
    <property type="term" value="C:cytosol"/>
    <property type="evidence" value="ECO:0007005"/>
    <property type="project" value="PomBase"/>
</dbReference>
<dbReference type="GO" id="GO:0005524">
    <property type="term" value="F:ATP binding"/>
    <property type="evidence" value="ECO:0000305"/>
    <property type="project" value="PomBase"/>
</dbReference>
<dbReference type="GO" id="GO:0008289">
    <property type="term" value="F:lipid binding"/>
    <property type="evidence" value="ECO:0000255"/>
    <property type="project" value="PomBase"/>
</dbReference>
<dbReference type="GO" id="GO:0106310">
    <property type="term" value="F:protein serine kinase activity"/>
    <property type="evidence" value="ECO:0007669"/>
    <property type="project" value="RHEA"/>
</dbReference>
<dbReference type="GO" id="GO:0004674">
    <property type="term" value="F:protein serine/threonine kinase activity"/>
    <property type="evidence" value="ECO:0000315"/>
    <property type="project" value="PomBase"/>
</dbReference>
<dbReference type="GO" id="GO:0034605">
    <property type="term" value="P:cellular response to heat"/>
    <property type="evidence" value="ECO:0000269"/>
    <property type="project" value="PomBase"/>
</dbReference>
<dbReference type="GO" id="GO:0035556">
    <property type="term" value="P:intracellular signal transduction"/>
    <property type="evidence" value="ECO:0000316"/>
    <property type="project" value="PomBase"/>
</dbReference>
<dbReference type="GO" id="GO:0110034">
    <property type="term" value="P:negative regulation of adenylate cyclase-activating glucose-activated G protein-coupled receptor signaling pathway"/>
    <property type="evidence" value="ECO:0000316"/>
    <property type="project" value="PomBase"/>
</dbReference>
<dbReference type="GO" id="GO:0031138">
    <property type="term" value="P:negative regulation of conjugation with cellular fusion"/>
    <property type="evidence" value="ECO:0000316"/>
    <property type="project" value="PomBase"/>
</dbReference>
<dbReference type="GO" id="GO:0038202">
    <property type="term" value="P:TORC1 signaling"/>
    <property type="evidence" value="ECO:0000353"/>
    <property type="project" value="PomBase"/>
</dbReference>
<dbReference type="CDD" id="cd05586">
    <property type="entry name" value="STKc_Sck1_like"/>
    <property type="match status" value="1"/>
</dbReference>
<dbReference type="FunFam" id="1.10.510.10:FF:000008">
    <property type="entry name" value="Non-specific serine/threonine protein kinase"/>
    <property type="match status" value="1"/>
</dbReference>
<dbReference type="FunFam" id="3.30.200.20:FF:000116">
    <property type="entry name" value="Non-specific serine/threonine protein kinase"/>
    <property type="match status" value="1"/>
</dbReference>
<dbReference type="Gene3D" id="2.60.40.150">
    <property type="entry name" value="C2 domain"/>
    <property type="match status" value="1"/>
</dbReference>
<dbReference type="Gene3D" id="3.30.200.20">
    <property type="entry name" value="Phosphorylase Kinase, domain 1"/>
    <property type="match status" value="1"/>
</dbReference>
<dbReference type="Gene3D" id="1.10.510.10">
    <property type="entry name" value="Transferase(Phosphotransferase) domain 1"/>
    <property type="match status" value="1"/>
</dbReference>
<dbReference type="InterPro" id="IPR000961">
    <property type="entry name" value="AGC-kinase_C"/>
</dbReference>
<dbReference type="InterPro" id="IPR000008">
    <property type="entry name" value="C2_dom"/>
</dbReference>
<dbReference type="InterPro" id="IPR035892">
    <property type="entry name" value="C2_domain_sf"/>
</dbReference>
<dbReference type="InterPro" id="IPR011009">
    <property type="entry name" value="Kinase-like_dom_sf"/>
</dbReference>
<dbReference type="InterPro" id="IPR017892">
    <property type="entry name" value="Pkinase_C"/>
</dbReference>
<dbReference type="InterPro" id="IPR000719">
    <property type="entry name" value="Prot_kinase_dom"/>
</dbReference>
<dbReference type="InterPro" id="IPR017441">
    <property type="entry name" value="Protein_kinase_ATP_BS"/>
</dbReference>
<dbReference type="InterPro" id="IPR008271">
    <property type="entry name" value="Ser/Thr_kinase_AS"/>
</dbReference>
<dbReference type="PANTHER" id="PTHR24351">
    <property type="entry name" value="RIBOSOMAL PROTEIN S6 KINASE"/>
    <property type="match status" value="1"/>
</dbReference>
<dbReference type="Pfam" id="PF00168">
    <property type="entry name" value="C2"/>
    <property type="match status" value="1"/>
</dbReference>
<dbReference type="Pfam" id="PF00069">
    <property type="entry name" value="Pkinase"/>
    <property type="match status" value="1"/>
</dbReference>
<dbReference type="Pfam" id="PF00433">
    <property type="entry name" value="Pkinase_C"/>
    <property type="match status" value="1"/>
</dbReference>
<dbReference type="SMART" id="SM00239">
    <property type="entry name" value="C2"/>
    <property type="match status" value="1"/>
</dbReference>
<dbReference type="SMART" id="SM00133">
    <property type="entry name" value="S_TK_X"/>
    <property type="match status" value="1"/>
</dbReference>
<dbReference type="SMART" id="SM00220">
    <property type="entry name" value="S_TKc"/>
    <property type="match status" value="1"/>
</dbReference>
<dbReference type="SUPFAM" id="SSF49562">
    <property type="entry name" value="C2 domain (Calcium/lipid-binding domain, CaLB)"/>
    <property type="match status" value="1"/>
</dbReference>
<dbReference type="SUPFAM" id="SSF56112">
    <property type="entry name" value="Protein kinase-like (PK-like)"/>
    <property type="match status" value="1"/>
</dbReference>
<dbReference type="PROSITE" id="PS51285">
    <property type="entry name" value="AGC_KINASE_CTER"/>
    <property type="match status" value="1"/>
</dbReference>
<dbReference type="PROSITE" id="PS50004">
    <property type="entry name" value="C2"/>
    <property type="match status" value="1"/>
</dbReference>
<dbReference type="PROSITE" id="PS00107">
    <property type="entry name" value="PROTEIN_KINASE_ATP"/>
    <property type="match status" value="1"/>
</dbReference>
<dbReference type="PROSITE" id="PS50011">
    <property type="entry name" value="PROTEIN_KINASE_DOM"/>
    <property type="match status" value="1"/>
</dbReference>
<dbReference type="PROSITE" id="PS00108">
    <property type="entry name" value="PROTEIN_KINASE_ST"/>
    <property type="match status" value="1"/>
</dbReference>
<accession>P50530</accession>
<accession>Q9UTF3</accession>
<evidence type="ECO:0000255" key="1">
    <source>
        <dbReference type="PROSITE-ProRule" id="PRU00041"/>
    </source>
</evidence>
<evidence type="ECO:0000255" key="2">
    <source>
        <dbReference type="PROSITE-ProRule" id="PRU00159"/>
    </source>
</evidence>
<evidence type="ECO:0000255" key="3">
    <source>
        <dbReference type="PROSITE-ProRule" id="PRU00618"/>
    </source>
</evidence>
<evidence type="ECO:0000255" key="4">
    <source>
        <dbReference type="PROSITE-ProRule" id="PRU10027"/>
    </source>
</evidence>
<evidence type="ECO:0000256" key="5">
    <source>
        <dbReference type="SAM" id="MobiDB-lite"/>
    </source>
</evidence>
<evidence type="ECO:0000269" key="6">
    <source>
    </source>
</evidence>
<evidence type="ECO:0000269" key="7">
    <source>
    </source>
</evidence>
<evidence type="ECO:0000305" key="8"/>
<protein>
    <recommendedName>
        <fullName>Serine/threonine-protein kinase sck1</fullName>
        <ecNumber>2.7.11.1</ecNumber>
    </recommendedName>
</protein>
<gene>
    <name type="primary">sck1</name>
    <name type="ORF">SPAC1B9.02c</name>
</gene>
<keyword id="KW-0067">ATP-binding</keyword>
<keyword id="KW-0114">cAMP</keyword>
<keyword id="KW-0418">Kinase</keyword>
<keyword id="KW-0547">Nucleotide-binding</keyword>
<keyword id="KW-0597">Phosphoprotein</keyword>
<keyword id="KW-1185">Reference proteome</keyword>
<keyword id="KW-0723">Serine/threonine-protein kinase</keyword>
<keyword id="KW-0808">Transferase</keyword>
<reference key="1">
    <citation type="journal article" date="1995" name="Genetics">
        <title>sck1, a high copy number suppressor of defects in the cAMP-dependent protein kinase pathway in fission yeast, encodes a protein homologous to the Saccharomyces cerevisiae SCH9 kinase.</title>
        <authorList>
            <person name="Jin M."/>
            <person name="Fujita M."/>
            <person name="Culley B."/>
            <person name="Apolinario E."/>
            <person name="Yamamoto M."/>
            <person name="Maundrell K."/>
            <person name="Hoffman C."/>
        </authorList>
    </citation>
    <scope>NUCLEOTIDE SEQUENCE [GENOMIC DNA]</scope>
</reference>
<reference key="2">
    <citation type="journal article" date="2002" name="Nature">
        <title>The genome sequence of Schizosaccharomyces pombe.</title>
        <authorList>
            <person name="Wood V."/>
            <person name="Gwilliam R."/>
            <person name="Rajandream M.A."/>
            <person name="Lyne M.H."/>
            <person name="Lyne R."/>
            <person name="Stewart A."/>
            <person name="Sgouros J.G."/>
            <person name="Peat N."/>
            <person name="Hayles J."/>
            <person name="Baker S.G."/>
            <person name="Basham D."/>
            <person name="Bowman S."/>
            <person name="Brooks K."/>
            <person name="Brown D."/>
            <person name="Brown S."/>
            <person name="Chillingworth T."/>
            <person name="Churcher C.M."/>
            <person name="Collins M."/>
            <person name="Connor R."/>
            <person name="Cronin A."/>
            <person name="Davis P."/>
            <person name="Feltwell T."/>
            <person name="Fraser A."/>
            <person name="Gentles S."/>
            <person name="Goble A."/>
            <person name="Hamlin N."/>
            <person name="Harris D.E."/>
            <person name="Hidalgo J."/>
            <person name="Hodgson G."/>
            <person name="Holroyd S."/>
            <person name="Hornsby T."/>
            <person name="Howarth S."/>
            <person name="Huckle E.J."/>
            <person name="Hunt S."/>
            <person name="Jagels K."/>
            <person name="James K.D."/>
            <person name="Jones L."/>
            <person name="Jones M."/>
            <person name="Leather S."/>
            <person name="McDonald S."/>
            <person name="McLean J."/>
            <person name="Mooney P."/>
            <person name="Moule S."/>
            <person name="Mungall K.L."/>
            <person name="Murphy L.D."/>
            <person name="Niblett D."/>
            <person name="Odell C."/>
            <person name="Oliver K."/>
            <person name="O'Neil S."/>
            <person name="Pearson D."/>
            <person name="Quail M.A."/>
            <person name="Rabbinowitsch E."/>
            <person name="Rutherford K.M."/>
            <person name="Rutter S."/>
            <person name="Saunders D."/>
            <person name="Seeger K."/>
            <person name="Sharp S."/>
            <person name="Skelton J."/>
            <person name="Simmonds M.N."/>
            <person name="Squares R."/>
            <person name="Squares S."/>
            <person name="Stevens K."/>
            <person name="Taylor K."/>
            <person name="Taylor R.G."/>
            <person name="Tivey A."/>
            <person name="Walsh S.V."/>
            <person name="Warren T."/>
            <person name="Whitehead S."/>
            <person name="Woodward J.R."/>
            <person name="Volckaert G."/>
            <person name="Aert R."/>
            <person name="Robben J."/>
            <person name="Grymonprez B."/>
            <person name="Weltjens I."/>
            <person name="Vanstreels E."/>
            <person name="Rieger M."/>
            <person name="Schaefer M."/>
            <person name="Mueller-Auer S."/>
            <person name="Gabel C."/>
            <person name="Fuchs M."/>
            <person name="Duesterhoeft A."/>
            <person name="Fritzc C."/>
            <person name="Holzer E."/>
            <person name="Moestl D."/>
            <person name="Hilbert H."/>
            <person name="Borzym K."/>
            <person name="Langer I."/>
            <person name="Beck A."/>
            <person name="Lehrach H."/>
            <person name="Reinhardt R."/>
            <person name="Pohl T.M."/>
            <person name="Eger P."/>
            <person name="Zimmermann W."/>
            <person name="Wedler H."/>
            <person name="Wambutt R."/>
            <person name="Purnelle B."/>
            <person name="Goffeau A."/>
            <person name="Cadieu E."/>
            <person name="Dreano S."/>
            <person name="Gloux S."/>
            <person name="Lelaure V."/>
            <person name="Mottier S."/>
            <person name="Galibert F."/>
            <person name="Aves S.J."/>
            <person name="Xiang Z."/>
            <person name="Hunt C."/>
            <person name="Moore K."/>
            <person name="Hurst S.M."/>
            <person name="Lucas M."/>
            <person name="Rochet M."/>
            <person name="Gaillardin C."/>
            <person name="Tallada V.A."/>
            <person name="Garzon A."/>
            <person name="Thode G."/>
            <person name="Daga R.R."/>
            <person name="Cruzado L."/>
            <person name="Jimenez J."/>
            <person name="Sanchez M."/>
            <person name="del Rey F."/>
            <person name="Benito J."/>
            <person name="Dominguez A."/>
            <person name="Revuelta J.L."/>
            <person name="Moreno S."/>
            <person name="Armstrong J."/>
            <person name="Forsburg S.L."/>
            <person name="Cerutti L."/>
            <person name="Lowe T."/>
            <person name="McCombie W.R."/>
            <person name="Paulsen I."/>
            <person name="Potashkin J."/>
            <person name="Shpakovski G.V."/>
            <person name="Ussery D."/>
            <person name="Barrell B.G."/>
            <person name="Nurse P."/>
        </authorList>
    </citation>
    <scope>NUCLEOTIDE SEQUENCE [LARGE SCALE GENOMIC DNA]</scope>
    <source>
        <strain>972 / ATCC 24843</strain>
    </source>
</reference>
<reference key="3">
    <citation type="journal article" date="1997" name="Microbiology">
        <title>Protein kinase Sck1 is involved in trehalase activation by glucose and nitrogen source in the fission yeast Schizosaccharomyces pombe.</title>
        <authorList>
            <person name="Soto T."/>
            <person name="Fernandez J."/>
            <person name="Cansado J."/>
            <person name="Vicente-Soler J."/>
            <person name="Gacto M."/>
        </authorList>
    </citation>
    <scope>FUNCTION</scope>
</reference>
<reference key="4">
    <citation type="journal article" date="2008" name="J. Proteome Res.">
        <title>Phosphoproteome analysis of fission yeast.</title>
        <authorList>
            <person name="Wilson-Grady J.T."/>
            <person name="Villen J."/>
            <person name="Gygi S.P."/>
        </authorList>
    </citation>
    <scope>PHOSPHORYLATION [LARGE SCALE ANALYSIS] AT THR-632 AND SER-665</scope>
    <scope>IDENTIFICATION BY MASS SPECTROMETRY</scope>
</reference>
<sequence length="696" mass="78595">MTEIFGKLHRSSNSENTNQASPSTIQSHSTQPVLSNDHSTKVNDYEGKEGASSNGYDPVFMSDRMKMRYNEITAQLHKEQSLKEDKESGSNSSESNGITPMGTYSEKPKLLQSRTPPSSCYIRHDTVVPKDKNGQHAFGRLYVRLHQGRDLNVKSVNAQPYAVITFEKTQVMVPPPFKDIDGGIPISIPSKNRPLAGSASGSSSGLHSELMLADVRCPHWDFETVFDVTKMKSQMVVSVYDKYEDDKFLGSVKITPIFLHEYVQEAWYKLEPLDLTKSLEGEIKVETIYEHIEHVRYGPEDFTALRLIGKGTFGQVYLVRKNDTNRIYAMKKISKKLIVRKKEVTHTLGERNILVRTSLDESPFIVGLKFSFQTASDLYLITDYMSGGELFWHLQHEGRFPEQRAKFYIAELVLALEHLHKHDIIYRDLKPENILLDADGHIALCDFGLSKANLSANATTNTFCGTTEYLAPEVLLEDKGYTKQVDFWSLGVLVFEMCCGWSPFYAPDVQQMYRNIAFGKVRFPKGVLSSEGRSFVRGLLNRNPNHRLGAVADTTELKEHPFFADINWDLLSKKKVQPPFKPNVQNDLDVSNFDKEFTNTNVKNINIVSNVDPANASTPLSNTIQDRFRGFTFVNKSIDEQFQNLGLQENEETDNLHACRTTTHSSVNSINSHGNPRTVDANDPVADTVFGETFEA</sequence>
<feature type="chain" id="PRO_0000086639" description="Serine/threonine-protein kinase sck1">
    <location>
        <begin position="1"/>
        <end position="696"/>
    </location>
</feature>
<feature type="domain" description="C2" evidence="1">
    <location>
        <begin position="122"/>
        <end position="272"/>
    </location>
</feature>
<feature type="domain" description="Protein kinase" evidence="2">
    <location>
        <begin position="302"/>
        <end position="563"/>
    </location>
</feature>
<feature type="domain" description="AGC-kinase C-terminal" evidence="3">
    <location>
        <begin position="564"/>
        <end position="643"/>
    </location>
</feature>
<feature type="region of interest" description="Disordered" evidence="5">
    <location>
        <begin position="1"/>
        <end position="59"/>
    </location>
</feature>
<feature type="region of interest" description="Disordered" evidence="5">
    <location>
        <begin position="77"/>
        <end position="118"/>
    </location>
</feature>
<feature type="compositionally biased region" description="Polar residues" evidence="5">
    <location>
        <begin position="11"/>
        <end position="37"/>
    </location>
</feature>
<feature type="compositionally biased region" description="Basic and acidic residues" evidence="5">
    <location>
        <begin position="38"/>
        <end position="49"/>
    </location>
</feature>
<feature type="compositionally biased region" description="Basic and acidic residues" evidence="5">
    <location>
        <begin position="77"/>
        <end position="88"/>
    </location>
</feature>
<feature type="active site" description="Proton acceptor" evidence="2 4">
    <location>
        <position position="428"/>
    </location>
</feature>
<feature type="binding site" evidence="2">
    <location>
        <begin position="308"/>
        <end position="316"/>
    </location>
    <ligand>
        <name>ATP</name>
        <dbReference type="ChEBI" id="CHEBI:30616"/>
    </ligand>
</feature>
<feature type="binding site" evidence="2">
    <location>
        <position position="331"/>
    </location>
    <ligand>
        <name>ATP</name>
        <dbReference type="ChEBI" id="CHEBI:30616"/>
    </ligand>
</feature>
<feature type="modified residue" description="Phosphothreonine" evidence="6">
    <location>
        <position position="632"/>
    </location>
</feature>
<feature type="modified residue" description="Phosphoserine" evidence="6">
    <location>
        <position position="665"/>
    </location>
</feature>
<feature type="sequence conflict" description="In Ref. 1; BAA07286." evidence="8" ref="1">
    <original>A</original>
    <variation>R</variation>
    <location>
        <position position="199"/>
    </location>
</feature>
<organism>
    <name type="scientific">Schizosaccharomyces pombe (strain 972 / ATCC 24843)</name>
    <name type="common">Fission yeast</name>
    <dbReference type="NCBI Taxonomy" id="284812"/>
    <lineage>
        <taxon>Eukaryota</taxon>
        <taxon>Fungi</taxon>
        <taxon>Dikarya</taxon>
        <taxon>Ascomycota</taxon>
        <taxon>Taphrinomycotina</taxon>
        <taxon>Schizosaccharomycetes</taxon>
        <taxon>Schizosaccharomycetales</taxon>
        <taxon>Schizosaccharomycetaceae</taxon>
        <taxon>Schizosaccharomyces</taxon>
    </lineage>
</organism>